<evidence type="ECO:0000250" key="1">
    <source>
        <dbReference type="UniProtKB" id="O00327"/>
    </source>
</evidence>
<evidence type="ECO:0000250" key="2">
    <source>
        <dbReference type="UniProtKB" id="Q9WTL8"/>
    </source>
</evidence>
<evidence type="ECO:0000255" key="3">
    <source>
        <dbReference type="PROSITE-ProRule" id="PRU00140"/>
    </source>
</evidence>
<evidence type="ECO:0000255" key="4">
    <source>
        <dbReference type="PROSITE-ProRule" id="PRU00981"/>
    </source>
</evidence>
<evidence type="ECO:0000256" key="5">
    <source>
        <dbReference type="SAM" id="MobiDB-lite"/>
    </source>
</evidence>
<keyword id="KW-0007">Acetylation</keyword>
<keyword id="KW-0010">Activator</keyword>
<keyword id="KW-0090">Biological rhythms</keyword>
<keyword id="KW-0963">Cytoplasm</keyword>
<keyword id="KW-0238">DNA-binding</keyword>
<keyword id="KW-1017">Isopeptide bond</keyword>
<keyword id="KW-0539">Nucleus</keyword>
<keyword id="KW-0597">Phosphoprotein</keyword>
<keyword id="KW-0677">Repeat</keyword>
<keyword id="KW-0804">Transcription</keyword>
<keyword id="KW-0805">Transcription regulation</keyword>
<keyword id="KW-0832">Ubl conjugation</keyword>
<proteinExistence type="evidence at transcript level"/>
<name>BMAL1_TYTAL</name>
<feature type="chain" id="PRO_0000262646" description="Basic helix-loop-helix ARNT-like protein 1">
    <location>
        <begin position="1"/>
        <end position="633"/>
    </location>
</feature>
<feature type="domain" description="bHLH" evidence="4">
    <location>
        <begin position="79"/>
        <end position="132"/>
    </location>
</feature>
<feature type="domain" description="PAS 1" evidence="3">
    <location>
        <begin position="150"/>
        <end position="222"/>
    </location>
</feature>
<feature type="domain" description="PAS 2" evidence="3">
    <location>
        <begin position="333"/>
        <end position="403"/>
    </location>
</feature>
<feature type="domain" description="PAC">
    <location>
        <begin position="408"/>
        <end position="451"/>
    </location>
</feature>
<feature type="region of interest" description="Disordered" evidence="5">
    <location>
        <begin position="1"/>
        <end position="65"/>
    </location>
</feature>
<feature type="region of interest" description="Disordered" evidence="5">
    <location>
        <begin position="472"/>
        <end position="499"/>
    </location>
</feature>
<feature type="region of interest" description="Disordered" evidence="5">
    <location>
        <begin position="518"/>
        <end position="555"/>
    </location>
</feature>
<feature type="short sequence motif" description="Nuclear localization signal" evidence="2">
    <location>
        <begin position="36"/>
        <end position="41"/>
    </location>
</feature>
<feature type="short sequence motif" description="Nuclear export signal 1" evidence="2">
    <location>
        <begin position="149"/>
        <end position="159"/>
    </location>
</feature>
<feature type="short sequence motif" description="Nuclear export signal 2" evidence="2">
    <location>
        <begin position="368"/>
        <end position="376"/>
    </location>
</feature>
<feature type="compositionally biased region" description="Polar residues" evidence="5">
    <location>
        <begin position="24"/>
        <end position="33"/>
    </location>
</feature>
<feature type="compositionally biased region" description="Low complexity" evidence="5">
    <location>
        <begin position="518"/>
        <end position="528"/>
    </location>
</feature>
<feature type="site" description="Interaction with E-box DNA" evidence="1">
    <location>
        <position position="84"/>
    </location>
</feature>
<feature type="site" description="Interaction with E-box DNA" evidence="1">
    <location>
        <position position="87"/>
    </location>
</feature>
<feature type="site" description="Interaction with E-box DNA" evidence="1">
    <location>
        <position position="88"/>
    </location>
</feature>
<feature type="site" description="Interaction with E-box DNA" evidence="1">
    <location>
        <position position="92"/>
    </location>
</feature>
<feature type="site" description="Important for interaction with CLOCK" evidence="1">
    <location>
        <position position="132"/>
    </location>
</feature>
<feature type="modified residue" description="Phosphoserine; by GSK3-beta" evidence="2">
    <location>
        <position position="17"/>
    </location>
</feature>
<feature type="modified residue" description="Phosphoserine" evidence="1">
    <location>
        <position position="85"/>
    </location>
</feature>
<feature type="modified residue" description="Phosphoserine; by CK2" evidence="2">
    <location>
        <position position="97"/>
    </location>
</feature>
<feature type="modified residue" description="N6-acetyllysine" evidence="2">
    <location>
        <position position="545"/>
    </location>
</feature>
<feature type="cross-link" description="Glycyl lysine isopeptide (Lys-Gly) (interchain with G-Cter in SUMO2 and SUMO3)" evidence="2">
    <location>
        <position position="259"/>
    </location>
</feature>
<feature type="cross-link" description="Glycyl lysine isopeptide (Lys-Gly) (interchain with G-Cter in SUMO)" evidence="2">
    <location>
        <position position="266"/>
    </location>
</feature>
<dbReference type="EMBL" id="AY150849">
    <property type="protein sequence ID" value="AAO06118.1"/>
    <property type="molecule type" value="mRNA"/>
</dbReference>
<dbReference type="RefSeq" id="XP_009971016.1">
    <property type="nucleotide sequence ID" value="XM_009972714.1"/>
</dbReference>
<dbReference type="SMR" id="Q6YGZ5"/>
<dbReference type="GeneID" id="104365864"/>
<dbReference type="KEGG" id="tala:104365864"/>
<dbReference type="CTD" id="406"/>
<dbReference type="OMA" id="PPTMVPD"/>
<dbReference type="OrthoDB" id="71302at2759"/>
<dbReference type="GO" id="GO:0005737">
    <property type="term" value="C:cytoplasm"/>
    <property type="evidence" value="ECO:0007669"/>
    <property type="project" value="UniProtKB-SubCell"/>
</dbReference>
<dbReference type="GO" id="GO:0016605">
    <property type="term" value="C:PML body"/>
    <property type="evidence" value="ECO:0007669"/>
    <property type="project" value="UniProtKB-SubCell"/>
</dbReference>
<dbReference type="GO" id="GO:0005667">
    <property type="term" value="C:transcription regulator complex"/>
    <property type="evidence" value="ECO:0007669"/>
    <property type="project" value="InterPro"/>
</dbReference>
<dbReference type="GO" id="GO:0003677">
    <property type="term" value="F:DNA binding"/>
    <property type="evidence" value="ECO:0000250"/>
    <property type="project" value="UniProtKB"/>
</dbReference>
<dbReference type="GO" id="GO:0003700">
    <property type="term" value="F:DNA-binding transcription factor activity"/>
    <property type="evidence" value="ECO:0007669"/>
    <property type="project" value="InterPro"/>
</dbReference>
<dbReference type="GO" id="GO:0046983">
    <property type="term" value="F:protein dimerization activity"/>
    <property type="evidence" value="ECO:0007669"/>
    <property type="project" value="InterPro"/>
</dbReference>
<dbReference type="GO" id="GO:0045893">
    <property type="term" value="P:positive regulation of DNA-templated transcription"/>
    <property type="evidence" value="ECO:0000250"/>
    <property type="project" value="UniProtKB"/>
</dbReference>
<dbReference type="GO" id="GO:1901985">
    <property type="term" value="P:positive regulation of protein acetylation"/>
    <property type="evidence" value="ECO:0000250"/>
    <property type="project" value="UniProtKB"/>
</dbReference>
<dbReference type="GO" id="GO:0051775">
    <property type="term" value="P:response to redox state"/>
    <property type="evidence" value="ECO:0000250"/>
    <property type="project" value="UniProtKB"/>
</dbReference>
<dbReference type="GO" id="GO:0048511">
    <property type="term" value="P:rhythmic process"/>
    <property type="evidence" value="ECO:0007669"/>
    <property type="project" value="UniProtKB-KW"/>
</dbReference>
<dbReference type="CDD" id="cd11438">
    <property type="entry name" value="bHLH-PAS_ARNTL_PASD3"/>
    <property type="match status" value="1"/>
</dbReference>
<dbReference type="CDD" id="cd00130">
    <property type="entry name" value="PAS"/>
    <property type="match status" value="2"/>
</dbReference>
<dbReference type="FunFam" id="4.10.280.10:FF:000018">
    <property type="entry name" value="Aryl hydrocarbon receptor nuclear translocator-like protein 1"/>
    <property type="match status" value="1"/>
</dbReference>
<dbReference type="FunFam" id="3.30.450.20:FF:000006">
    <property type="entry name" value="aryl hydrocarbon receptor nuclear translocator-like protein 1"/>
    <property type="match status" value="1"/>
</dbReference>
<dbReference type="FunFam" id="3.30.450.20:FF:000010">
    <property type="entry name" value="Aryl hydrocarbon receptor nuclear translocator-like, isoform CRA_b"/>
    <property type="match status" value="1"/>
</dbReference>
<dbReference type="Gene3D" id="4.10.280.10">
    <property type="entry name" value="Helix-loop-helix DNA-binding domain"/>
    <property type="match status" value="1"/>
</dbReference>
<dbReference type="Gene3D" id="3.30.450.20">
    <property type="entry name" value="PAS domain"/>
    <property type="match status" value="2"/>
</dbReference>
<dbReference type="InterPro" id="IPR011598">
    <property type="entry name" value="bHLH_dom"/>
</dbReference>
<dbReference type="InterPro" id="IPR050933">
    <property type="entry name" value="Circadian_TF"/>
</dbReference>
<dbReference type="InterPro" id="IPR036638">
    <property type="entry name" value="HLH_DNA-bd_sf"/>
</dbReference>
<dbReference type="InterPro" id="IPR001067">
    <property type="entry name" value="Nuc_translocat"/>
</dbReference>
<dbReference type="InterPro" id="IPR001610">
    <property type="entry name" value="PAC"/>
</dbReference>
<dbReference type="InterPro" id="IPR000014">
    <property type="entry name" value="PAS"/>
</dbReference>
<dbReference type="InterPro" id="IPR035965">
    <property type="entry name" value="PAS-like_dom_sf"/>
</dbReference>
<dbReference type="InterPro" id="IPR013767">
    <property type="entry name" value="PAS_fold"/>
</dbReference>
<dbReference type="NCBIfam" id="TIGR00229">
    <property type="entry name" value="sensory_box"/>
    <property type="match status" value="1"/>
</dbReference>
<dbReference type="PANTHER" id="PTHR23042">
    <property type="entry name" value="CIRCADIAN PROTEIN CLOCK/ARNT/BMAL/PAS"/>
    <property type="match status" value="1"/>
</dbReference>
<dbReference type="Pfam" id="PF00010">
    <property type="entry name" value="HLH"/>
    <property type="match status" value="1"/>
</dbReference>
<dbReference type="Pfam" id="PF00989">
    <property type="entry name" value="PAS"/>
    <property type="match status" value="1"/>
</dbReference>
<dbReference type="Pfam" id="PF14598">
    <property type="entry name" value="PAS_11"/>
    <property type="match status" value="1"/>
</dbReference>
<dbReference type="PRINTS" id="PR00785">
    <property type="entry name" value="NCTRNSLOCATR"/>
</dbReference>
<dbReference type="SMART" id="SM00353">
    <property type="entry name" value="HLH"/>
    <property type="match status" value="1"/>
</dbReference>
<dbReference type="SMART" id="SM00086">
    <property type="entry name" value="PAC"/>
    <property type="match status" value="1"/>
</dbReference>
<dbReference type="SMART" id="SM00091">
    <property type="entry name" value="PAS"/>
    <property type="match status" value="2"/>
</dbReference>
<dbReference type="SUPFAM" id="SSF47459">
    <property type="entry name" value="HLH, helix-loop-helix DNA-binding domain"/>
    <property type="match status" value="1"/>
</dbReference>
<dbReference type="SUPFAM" id="SSF55785">
    <property type="entry name" value="PYP-like sensor domain (PAS domain)"/>
    <property type="match status" value="2"/>
</dbReference>
<dbReference type="PROSITE" id="PS50888">
    <property type="entry name" value="BHLH"/>
    <property type="match status" value="1"/>
</dbReference>
<dbReference type="PROSITE" id="PS50112">
    <property type="entry name" value="PAS"/>
    <property type="match status" value="2"/>
</dbReference>
<reference key="1">
    <citation type="journal article" date="2003" name="Comp. Biochem. Physiol.">
        <title>Comparative analysis of avian BMAL1 and CLOCK protein sequences: a search for features associated with owl nocturnal behaviour.</title>
        <authorList>
            <person name="Fidler A.E."/>
            <person name="Gwinner E."/>
        </authorList>
    </citation>
    <scope>NUCLEOTIDE SEQUENCE [MRNA]</scope>
    <source>
        <tissue>Liver</tissue>
    </source>
</reference>
<sequence length="633" mass="69551">MADQRMDISSTISDFMSPDPADLISSSLSTSGMDCNRKRKGSSTDYQLDGFPFEEGMDTDKDDQHGRLEYTDQQGRIKNAREAHSQIEKRRRDKMNSFIDELASLVPTCNAMSRKLDKLTVLRMAVQHMKTLRGATNPYTEANYKPAFLSDDELKHLILRAADGFLFVVGCDRGKILFVSESVFKILNYSQNDLIGQSLFDYLHPKDIAKVKEQLSSSDTAPRERLIDAKTGLPVKTDITPGPSRLCSGARRSFFCRMKCNRPSVKVEDKDFPSTCSKKKADRKSFCTIHSTGYLKSWPPTKMGLDEDNEPDNEGCNLSCLVAIGRLHPHVVPQPVNGEIRVKPTEYVSRHAIDGKFVFVDQRATAILAYLPQELLGTSCYEYFHQDDIGHLAECHRQVLQTREKITTNCYKFKIKDGSFITLRSRWFSFMNPWTKEVEYIVSTNTVVSTNVLDSGDAAFPQLAASPHSMDSVLQAGEGGPKRTHPTVPGIPGGTRAGAGKIGRMIAEEIMEIHRIRGSSPSSCGSSPLNITSTPPPDTSSPGGKKILNGGTPDISSAGLLSGQIQDNSGYPYSDNSSILGENSHIGIDMIDNDQGSSSPSNDEAAMAVIMSLLEADAGLGGPVDFSDLPWPL</sequence>
<gene>
    <name type="primary">BMAL1</name>
    <name type="synonym">ARNTL</name>
</gene>
<comment type="function">
    <text evidence="1 2">Transcriptional activator which forms a core component of the circadian clock. The circadian clock, an internal time-keeping system, regulates various physiological processes through the generation of approximately 24 hour circadian rhythms in gene expression, which are translated into rhythms in metabolism and behavior. It is derived from the Latin roots 'circa' (about) and 'diem' (day) and acts as an important regulator of a wide array of physiological functions including metabolism, sleep, body temperature, blood pressure, endocrine, immune, cardiovascular, and renal function. Consists of two major components: the central clock, residing in the suprachiasmatic nucleus (SCN) of the brain, and the peripheral clocks that are present in nearly every tissue and organ system. Both the central and peripheral clocks can be reset by environmental cues, also known as Zeitgebers (German for 'timegivers'). The predominant Zeitgeber for the central clock is light, which is sensed by retina and signals directly to the SCN. The central clock entrains the peripheral clocks through neuronal and hormonal signals, body temperature and feeding-related cues, aligning all clocks with the external light/dark cycle. Circadian rhythms allow an organism to achieve temporal homeostasis with its environment at the molecular level by regulating gene expression to create a peak of protein expression once every 24 hours to control when a particular physiological process is most active with respect to the solar day. Transcription and translation of core clock components (CLOCK, NPAS2, BMAL1, BMAL2, PER1, PER2, PER3, CRY1 and CRY2) plays a critical role in rhythm generation, whereas delays imposed by post-translational modifications (PTMs) are important for determining the period (tau) of the rhythms (tau refers to the period of a rhythm and is the length, in time, of one complete cycle). A diurnal rhythm is synchronized with the day/night cycle, while the ultradian and infradian rhythms have a period shorter and longer than 24 hours, respectively. Disruptions in the circadian rhythms contribute to the pathology of cardiovascular diseases, cancer, metabolic syndromes and aging. A transcription/translation feedback loop (TTFL) forms the core of the molecular circadian clock mechanism. Transcription factors, CLOCK or NPAS2 and BMAL1 or BMAL2, form the positive limb of the feedback loop, act in the form of a heterodimer and activate the transcription of core clock genes and clock-controlled genes (involved in key metabolic processes), harboring E-box elements (5'-CACGTG-3') within their promoters. The core clock genes: PER1/2/3 and CRY1/2 which are transcriptional repressors form the negative limb of the feedback loop and interact with the CLOCK|NPAS2-BMAL1|BMAL2 heterodimer inhibiting its activity and thereby negatively regulating their own expression. This heterodimer also activates nuclear receptors NR1D1/2 and RORA/B/G, which form a second feedback loop and which activate and repress BMAL1 transcription, respectively. The preferred binding motif for the CLOCK-BMAL1 heterodimer is 5'-CACGTGA-3', which contains a flanking adenine nucleotide at the 3-prime end of the canonical 6-nucleotide E-box sequence. CLOCK specifically binds to the half-site 5'-CAC-3', while BMAL1 binds to the half-site 5'-GTGA-3'. Essential for the rhythmic interaction of CLOCK with ASS1 and plays a critical role in positively regulating CLOCK-mediated acetylation of ASS1. Plays a role in protecting against lethal sepsis by limiting the expression of immune checkpoint protein CD274 in macrophages in a PKM2-dependent manner (By similarity).</text>
</comment>
<comment type="subunit">
    <text evidence="2">Component of the circadian clock oscillator which includes the CRY1/2 proteins, CLOCK or NPAS2, BMAL1 or BMAL2, CSNK1D and/or CSNK1E, TIMELESS and the PER1/2/3 proteins (By similarity). Forms a heterodimer with CLOCK (By similarity). The CLOCK-BMAL1 heterodimer is required for E-box-dependent transactivation, for CLOCK nuclear translocation and degradation, and, for phosphorylation of both CLOCK and BMAL1 (By similarity). Interacts with PER1, PER2, CRY1 and CRY2 and this interaction requires a translocation to the nucleus (By similarity). Interaction of the CLOCK-BMAL1 heterodimer with PER or CRY inhibits transcription activation (By similarity).</text>
</comment>
<comment type="subcellular location">
    <subcellularLocation>
        <location evidence="4">Nucleus</location>
    </subcellularLocation>
    <subcellularLocation>
        <location evidence="2">Cytoplasm</location>
    </subcellularLocation>
    <subcellularLocation>
        <location evidence="2">Nucleus</location>
        <location evidence="2">PML body</location>
    </subcellularLocation>
    <text evidence="2">Shuttles between the nucleus and the cytoplasm and this nucleocytoplasmic shuttling is essential for the nuclear accumulation of CLOCK, target gene transcription and the degradation of the CLOCK-BMAL1 heterodimer. The sumoylated form localizes in the PML body.</text>
</comment>
<comment type="PTM">
    <text evidence="2">Ubiquitinated, leading to its proteasomal degradation. Deubiquitinated by USP9X.</text>
</comment>
<comment type="PTM">
    <text evidence="2">O-glycosylated; contains O-GlcNAc. O-glycosylation by OGT prevents protein degradation by inhibiting ubiquitination. It also stabilizes the CLOCK-BMAL1 heterodimer thereby increasing CLOCK-BMAL1-mediated transcription of genes in the negative loop of the circadian clock such as PER1/2/3 and CRY1/2.</text>
</comment>
<comment type="PTM">
    <text evidence="2">Acetylated on Lys-545 by CLOCK during the repression phase of the circadian cycle. Acetylation facilitates recruitment of CRY1 protein and initiates the repression phase of the circadian cycle. Acetylated at Lys-545 by KAT5 during the activation phase of the cycle, leading to recruitment of the positive transcription elongation factor b (P-TEFb) and BRD4, followed by productive elongation of circadian transcripts. Deacetylated by SIRT1, which may result in decreased protein stability.</text>
</comment>
<comment type="PTM">
    <text evidence="1 2">Phosphorylated upon dimerization with CLOCK. Phosphorylation enhances the transcriptional activity, alters the subcellular localization and decreases the stability of the CLOCK-BMAL1 heterodimer by promoting its degradation. Phosphorylation shows circadian variations in the liver with a peak between CT10 to CT14. Phosphorylation at Ser-97 by CK2 is essential for its nuclear localization, its interaction with CLOCK and controls CLOCK nuclear entry. Dephosphorylation at Ser-85 is important for dimerization with CLOCK and transcriptional activity.</text>
</comment>
<comment type="PTM">
    <text evidence="2">Sumoylated on Lys-266 upon dimerization with CLOCK. Predominantly conjugated to poly-SUMO2/3 rather than SUMO1 and the level of these conjugates undergo rhythmic variation, peaking at CT9-CT12. Sumoylation localizes it exclusively to the PML body and promotes its ubiquitination in the PML body, ubiquitin-dependent proteasomal degradation and the transcriptional activity of the CLOCK-BMAL1 heterodimer.</text>
</comment>
<comment type="PTM">
    <text evidence="2">Undergoes lysosome-mediated degradation in a time-dependent manner in the liver.</text>
</comment>
<protein>
    <recommendedName>
        <fullName>Basic helix-loop-helix ARNT-like protein 1</fullName>
    </recommendedName>
    <alternativeName>
        <fullName>Aryl hydrocarbon receptor nuclear translocator-like protein 1</fullName>
    </alternativeName>
    <alternativeName>
        <fullName>Brain and muscle ARNT-like 1</fullName>
    </alternativeName>
</protein>
<accession>Q6YGZ5</accession>
<organism>
    <name type="scientific">Tyto alba</name>
    <name type="common">Barn owl</name>
    <dbReference type="NCBI Taxonomy" id="56313"/>
    <lineage>
        <taxon>Eukaryota</taxon>
        <taxon>Metazoa</taxon>
        <taxon>Chordata</taxon>
        <taxon>Craniata</taxon>
        <taxon>Vertebrata</taxon>
        <taxon>Euteleostomi</taxon>
        <taxon>Archelosauria</taxon>
        <taxon>Archosauria</taxon>
        <taxon>Dinosauria</taxon>
        <taxon>Saurischia</taxon>
        <taxon>Theropoda</taxon>
        <taxon>Coelurosauria</taxon>
        <taxon>Aves</taxon>
        <taxon>Neognathae</taxon>
        <taxon>Neoaves</taxon>
        <taxon>Telluraves</taxon>
        <taxon>Strigiformes</taxon>
        <taxon>Tytonidae</taxon>
        <taxon>Tyto</taxon>
    </lineage>
</organism>